<organismHost>
    <name type="scientific">Acanthamoeba polyphaga</name>
    <name type="common">Amoeba</name>
    <dbReference type="NCBI Taxonomy" id="5757"/>
</organismHost>
<name>YL712_MIMIV</name>
<keyword id="KW-1185">Reference proteome</keyword>
<sequence length="530" mass="61664">MATQVPVQSGAEKSNFTLNPDYGKMMEFGTNSAIVSAFIQMLFSSKNKFSFPMVFVMIRNMAVLLLVKTCLEDSKAFLDKFKLTNLNSLKFSWQRMMHKHLTYTIQHQSNGKWMYENTPISMTLLTPFFEQRQILIGRPDNYYYSYRTCLLKISITNERINIIFPDIQSVVQHVNNDIIHRNREIICGDRTVMYKVSIGNGAVPNLDPVAISKAYGTDIYLQLERSIRNYFFIDIVMKFQSIPFCINFNGEPGTGKTTFGSYIANKGIFDRIIIYNLVQSTNFDFKDNLNKIEMKIDQSTNKSKPMDGSEKVLIIFDEIDKWLESYIENKIHKMRDEARVTKQSNGGSAGGDKNTGTIIEGFQKLTPEEEQEKKNQLRFTFLDQLYNVVDGHTLKNNKKYVIIFNTNHFDNMFVGSPERFNALKDRFQKYEFKKLRKREIINYLNYVNDCFKNYDLTEEDKNILLSDTFDVDNLCVSNTNIYDDIPNDMVVSFRNLQKILRANHFNINRVVEHLSQIECSEIFTSDDIPS</sequence>
<gene>
    <name type="ordered locus">MIMI_L712</name>
</gene>
<protein>
    <recommendedName>
        <fullName>Uncharacterized protein L712</fullName>
    </recommendedName>
</protein>
<reference key="1">
    <citation type="journal article" date="2004" name="Science">
        <title>The 1.2-megabase genome sequence of Mimivirus.</title>
        <authorList>
            <person name="Raoult D."/>
            <person name="Audic S."/>
            <person name="Robert C."/>
            <person name="Abergel C."/>
            <person name="Renesto P."/>
            <person name="Ogata H."/>
            <person name="La Scola B."/>
            <person name="Susan M."/>
            <person name="Claverie J.-M."/>
        </authorList>
    </citation>
    <scope>NUCLEOTIDE SEQUENCE [LARGE SCALE GENOMIC DNA]</scope>
    <source>
        <strain>Rowbotham-Bradford</strain>
    </source>
</reference>
<accession>Q5UQ54</accession>
<dbReference type="EMBL" id="AY653733">
    <property type="protein sequence ID" value="AAV50972.1"/>
    <property type="molecule type" value="Genomic_DNA"/>
</dbReference>
<dbReference type="KEGG" id="vg:9925365"/>
<dbReference type="OrthoDB" id="7181at10239"/>
<dbReference type="Proteomes" id="UP000001134">
    <property type="component" value="Genome"/>
</dbReference>
<dbReference type="GO" id="GO:0005524">
    <property type="term" value="F:ATP binding"/>
    <property type="evidence" value="ECO:0007669"/>
    <property type="project" value="InterPro"/>
</dbReference>
<dbReference type="GO" id="GO:0016887">
    <property type="term" value="F:ATP hydrolysis activity"/>
    <property type="evidence" value="ECO:0007669"/>
    <property type="project" value="InterPro"/>
</dbReference>
<dbReference type="Gene3D" id="3.40.50.300">
    <property type="entry name" value="P-loop containing nucleotide triphosphate hydrolases"/>
    <property type="match status" value="1"/>
</dbReference>
<dbReference type="InterPro" id="IPR003959">
    <property type="entry name" value="ATPase_AAA_core"/>
</dbReference>
<dbReference type="InterPro" id="IPR027417">
    <property type="entry name" value="P-loop_NTPase"/>
</dbReference>
<dbReference type="Pfam" id="PF00004">
    <property type="entry name" value="AAA"/>
    <property type="match status" value="1"/>
</dbReference>
<dbReference type="SUPFAM" id="SSF52540">
    <property type="entry name" value="P-loop containing nucleoside triphosphate hydrolases"/>
    <property type="match status" value="1"/>
</dbReference>
<organism>
    <name type="scientific">Acanthamoeba polyphaga mimivirus</name>
    <name type="common">APMV</name>
    <dbReference type="NCBI Taxonomy" id="212035"/>
    <lineage>
        <taxon>Viruses</taxon>
        <taxon>Varidnaviria</taxon>
        <taxon>Bamfordvirae</taxon>
        <taxon>Nucleocytoviricota</taxon>
        <taxon>Megaviricetes</taxon>
        <taxon>Imitervirales</taxon>
        <taxon>Mimiviridae</taxon>
        <taxon>Megamimivirinae</taxon>
        <taxon>Mimivirus</taxon>
        <taxon>Mimivirus bradfordmassiliense</taxon>
    </lineage>
</organism>
<proteinExistence type="predicted"/>
<feature type="chain" id="PRO_0000244006" description="Uncharacterized protein L712">
    <location>
        <begin position="1"/>
        <end position="530"/>
    </location>
</feature>